<sequence length="125" mass="14238">MRHYEIILLIHPDQSEQVPAMLERYKGMITAGGGKIHRVEDWGRRQLAYMINKLAKAHYLCVNIEADQAVMAELEHAFKFNDAVLRHLTVVKKKAETGASSMMKTVEREEARKASQAEFAAANER</sequence>
<accession>A1TLI1</accession>
<comment type="function">
    <text evidence="1">Binds together with bS18 to 16S ribosomal RNA.</text>
</comment>
<comment type="similarity">
    <text evidence="1">Belongs to the bacterial ribosomal protein bS6 family.</text>
</comment>
<reference key="1">
    <citation type="submission" date="2006-12" db="EMBL/GenBank/DDBJ databases">
        <title>Complete sequence of Acidovorax avenae subsp. citrulli AAC00-1.</title>
        <authorList>
            <person name="Copeland A."/>
            <person name="Lucas S."/>
            <person name="Lapidus A."/>
            <person name="Barry K."/>
            <person name="Detter J.C."/>
            <person name="Glavina del Rio T."/>
            <person name="Dalin E."/>
            <person name="Tice H."/>
            <person name="Pitluck S."/>
            <person name="Kiss H."/>
            <person name="Brettin T."/>
            <person name="Bruce D."/>
            <person name="Han C."/>
            <person name="Tapia R."/>
            <person name="Gilna P."/>
            <person name="Schmutz J."/>
            <person name="Larimer F."/>
            <person name="Land M."/>
            <person name="Hauser L."/>
            <person name="Kyrpides N."/>
            <person name="Kim E."/>
            <person name="Stahl D."/>
            <person name="Richardson P."/>
        </authorList>
    </citation>
    <scope>NUCLEOTIDE SEQUENCE [LARGE SCALE GENOMIC DNA]</scope>
    <source>
        <strain>AAC00-1</strain>
    </source>
</reference>
<protein>
    <recommendedName>
        <fullName evidence="1">Small ribosomal subunit protein bS6</fullName>
    </recommendedName>
    <alternativeName>
        <fullName evidence="3">30S ribosomal protein S6</fullName>
    </alternativeName>
</protein>
<name>RS6_PARC0</name>
<proteinExistence type="inferred from homology"/>
<keyword id="KW-0687">Ribonucleoprotein</keyword>
<keyword id="KW-0689">Ribosomal protein</keyword>
<keyword id="KW-0694">RNA-binding</keyword>
<keyword id="KW-0699">rRNA-binding</keyword>
<evidence type="ECO:0000255" key="1">
    <source>
        <dbReference type="HAMAP-Rule" id="MF_00360"/>
    </source>
</evidence>
<evidence type="ECO:0000256" key="2">
    <source>
        <dbReference type="SAM" id="MobiDB-lite"/>
    </source>
</evidence>
<evidence type="ECO:0000305" key="3"/>
<feature type="chain" id="PRO_1000005202" description="Small ribosomal subunit protein bS6">
    <location>
        <begin position="1"/>
        <end position="125"/>
    </location>
</feature>
<feature type="region of interest" description="Disordered" evidence="2">
    <location>
        <begin position="96"/>
        <end position="125"/>
    </location>
</feature>
<feature type="compositionally biased region" description="Basic and acidic residues" evidence="2">
    <location>
        <begin position="105"/>
        <end position="115"/>
    </location>
</feature>
<dbReference type="EMBL" id="CP000512">
    <property type="protein sequence ID" value="ABM31819.1"/>
    <property type="molecule type" value="Genomic_DNA"/>
</dbReference>
<dbReference type="RefSeq" id="WP_011794371.1">
    <property type="nucleotide sequence ID" value="NC_008752.1"/>
</dbReference>
<dbReference type="SMR" id="A1TLI1"/>
<dbReference type="STRING" id="397945.Aave_1228"/>
<dbReference type="GeneID" id="79790889"/>
<dbReference type="KEGG" id="aav:Aave_1228"/>
<dbReference type="eggNOG" id="COG0360">
    <property type="taxonomic scope" value="Bacteria"/>
</dbReference>
<dbReference type="HOGENOM" id="CLU_113441_6_1_4"/>
<dbReference type="OrthoDB" id="9812702at2"/>
<dbReference type="Proteomes" id="UP000002596">
    <property type="component" value="Chromosome"/>
</dbReference>
<dbReference type="GO" id="GO:0022627">
    <property type="term" value="C:cytosolic small ribosomal subunit"/>
    <property type="evidence" value="ECO:0007669"/>
    <property type="project" value="TreeGrafter"/>
</dbReference>
<dbReference type="GO" id="GO:0070181">
    <property type="term" value="F:small ribosomal subunit rRNA binding"/>
    <property type="evidence" value="ECO:0007669"/>
    <property type="project" value="TreeGrafter"/>
</dbReference>
<dbReference type="GO" id="GO:0003735">
    <property type="term" value="F:structural constituent of ribosome"/>
    <property type="evidence" value="ECO:0007669"/>
    <property type="project" value="InterPro"/>
</dbReference>
<dbReference type="GO" id="GO:0006412">
    <property type="term" value="P:translation"/>
    <property type="evidence" value="ECO:0007669"/>
    <property type="project" value="UniProtKB-UniRule"/>
</dbReference>
<dbReference type="CDD" id="cd00473">
    <property type="entry name" value="bS6"/>
    <property type="match status" value="1"/>
</dbReference>
<dbReference type="Gene3D" id="3.30.70.60">
    <property type="match status" value="1"/>
</dbReference>
<dbReference type="HAMAP" id="MF_00360">
    <property type="entry name" value="Ribosomal_bS6"/>
    <property type="match status" value="1"/>
</dbReference>
<dbReference type="InterPro" id="IPR000529">
    <property type="entry name" value="Ribosomal_bS6"/>
</dbReference>
<dbReference type="InterPro" id="IPR020815">
    <property type="entry name" value="Ribosomal_bS6_CS"/>
</dbReference>
<dbReference type="InterPro" id="IPR035980">
    <property type="entry name" value="Ribosomal_bS6_sf"/>
</dbReference>
<dbReference type="InterPro" id="IPR020814">
    <property type="entry name" value="Ribosomal_S6_plastid/chlpt"/>
</dbReference>
<dbReference type="InterPro" id="IPR014717">
    <property type="entry name" value="Transl_elong_EF1B/ribsomal_bS6"/>
</dbReference>
<dbReference type="NCBIfam" id="TIGR00166">
    <property type="entry name" value="S6"/>
    <property type="match status" value="1"/>
</dbReference>
<dbReference type="PANTHER" id="PTHR21011">
    <property type="entry name" value="MITOCHONDRIAL 28S RIBOSOMAL PROTEIN S6"/>
    <property type="match status" value="1"/>
</dbReference>
<dbReference type="PANTHER" id="PTHR21011:SF1">
    <property type="entry name" value="SMALL RIBOSOMAL SUBUNIT PROTEIN BS6M"/>
    <property type="match status" value="1"/>
</dbReference>
<dbReference type="Pfam" id="PF01250">
    <property type="entry name" value="Ribosomal_S6"/>
    <property type="match status" value="1"/>
</dbReference>
<dbReference type="SUPFAM" id="SSF54995">
    <property type="entry name" value="Ribosomal protein S6"/>
    <property type="match status" value="1"/>
</dbReference>
<dbReference type="PROSITE" id="PS01048">
    <property type="entry name" value="RIBOSOMAL_S6"/>
    <property type="match status" value="1"/>
</dbReference>
<organism>
    <name type="scientific">Paracidovorax citrulli (strain AAC00-1)</name>
    <name type="common">Acidovorax citrulli</name>
    <dbReference type="NCBI Taxonomy" id="397945"/>
    <lineage>
        <taxon>Bacteria</taxon>
        <taxon>Pseudomonadati</taxon>
        <taxon>Pseudomonadota</taxon>
        <taxon>Betaproteobacteria</taxon>
        <taxon>Burkholderiales</taxon>
        <taxon>Comamonadaceae</taxon>
        <taxon>Paracidovorax</taxon>
    </lineage>
</organism>
<gene>
    <name evidence="1" type="primary">rpsF</name>
    <name type="ordered locus">Aave_1228</name>
</gene>